<evidence type="ECO:0000255" key="1">
    <source>
        <dbReference type="HAMAP-Rule" id="MF_01713"/>
    </source>
</evidence>
<gene>
    <name evidence="1" type="primary">phnC3</name>
    <name type="ordered locus">BH2974</name>
</gene>
<name>PHNC3_HALH5</name>
<organism>
    <name type="scientific">Halalkalibacterium halodurans (strain ATCC BAA-125 / DSM 18197 / FERM 7344 / JCM 9153 / C-125)</name>
    <name type="common">Bacillus halodurans</name>
    <dbReference type="NCBI Taxonomy" id="272558"/>
    <lineage>
        <taxon>Bacteria</taxon>
        <taxon>Bacillati</taxon>
        <taxon>Bacillota</taxon>
        <taxon>Bacilli</taxon>
        <taxon>Bacillales</taxon>
        <taxon>Bacillaceae</taxon>
        <taxon>Halalkalibacterium (ex Joshi et al. 2022)</taxon>
    </lineage>
</organism>
<dbReference type="EC" id="7.3.2.2" evidence="1"/>
<dbReference type="EMBL" id="BA000004">
    <property type="protein sequence ID" value="BAB06693.1"/>
    <property type="molecule type" value="Genomic_DNA"/>
</dbReference>
<dbReference type="PIR" id="F84021">
    <property type="entry name" value="F84021"/>
</dbReference>
<dbReference type="RefSeq" id="WP_010899119.1">
    <property type="nucleotide sequence ID" value="NC_002570.2"/>
</dbReference>
<dbReference type="SMR" id="Q9K8N1"/>
<dbReference type="STRING" id="272558.gene:10728884"/>
<dbReference type="KEGG" id="bha:BH2974"/>
<dbReference type="eggNOG" id="COG3638">
    <property type="taxonomic scope" value="Bacteria"/>
</dbReference>
<dbReference type="HOGENOM" id="CLU_000604_1_22_9"/>
<dbReference type="OrthoDB" id="9802264at2"/>
<dbReference type="Proteomes" id="UP000001258">
    <property type="component" value="Chromosome"/>
</dbReference>
<dbReference type="GO" id="GO:0005886">
    <property type="term" value="C:plasma membrane"/>
    <property type="evidence" value="ECO:0007669"/>
    <property type="project" value="UniProtKB-SubCell"/>
</dbReference>
<dbReference type="GO" id="GO:0015416">
    <property type="term" value="F:ABC-type phosphonate transporter activity"/>
    <property type="evidence" value="ECO:0007669"/>
    <property type="project" value="UniProtKB-EC"/>
</dbReference>
<dbReference type="GO" id="GO:0005524">
    <property type="term" value="F:ATP binding"/>
    <property type="evidence" value="ECO:0007669"/>
    <property type="project" value="UniProtKB-KW"/>
</dbReference>
<dbReference type="GO" id="GO:0016887">
    <property type="term" value="F:ATP hydrolysis activity"/>
    <property type="evidence" value="ECO:0007669"/>
    <property type="project" value="InterPro"/>
</dbReference>
<dbReference type="CDD" id="cd03256">
    <property type="entry name" value="ABC_PhnC_transporter"/>
    <property type="match status" value="1"/>
</dbReference>
<dbReference type="Gene3D" id="3.40.50.300">
    <property type="entry name" value="P-loop containing nucleotide triphosphate hydrolases"/>
    <property type="match status" value="1"/>
</dbReference>
<dbReference type="InterPro" id="IPR003593">
    <property type="entry name" value="AAA+_ATPase"/>
</dbReference>
<dbReference type="InterPro" id="IPR003439">
    <property type="entry name" value="ABC_transporter-like_ATP-bd"/>
</dbReference>
<dbReference type="InterPro" id="IPR017871">
    <property type="entry name" value="ABC_transporter-like_CS"/>
</dbReference>
<dbReference type="InterPro" id="IPR012693">
    <property type="entry name" value="ABC_transpr_PhnC"/>
</dbReference>
<dbReference type="InterPro" id="IPR050086">
    <property type="entry name" value="MetN_ABC_transporter-like"/>
</dbReference>
<dbReference type="InterPro" id="IPR027417">
    <property type="entry name" value="P-loop_NTPase"/>
</dbReference>
<dbReference type="NCBIfam" id="TIGR02315">
    <property type="entry name" value="ABC_phnC"/>
    <property type="match status" value="1"/>
</dbReference>
<dbReference type="PANTHER" id="PTHR43166">
    <property type="entry name" value="AMINO ACID IMPORT ATP-BINDING PROTEIN"/>
    <property type="match status" value="1"/>
</dbReference>
<dbReference type="PANTHER" id="PTHR43166:SF6">
    <property type="entry name" value="PHOSPHONATES IMPORT ATP-BINDING PROTEIN PHNC"/>
    <property type="match status" value="1"/>
</dbReference>
<dbReference type="Pfam" id="PF00005">
    <property type="entry name" value="ABC_tran"/>
    <property type="match status" value="1"/>
</dbReference>
<dbReference type="SMART" id="SM00382">
    <property type="entry name" value="AAA"/>
    <property type="match status" value="1"/>
</dbReference>
<dbReference type="SUPFAM" id="SSF52540">
    <property type="entry name" value="P-loop containing nucleoside triphosphate hydrolases"/>
    <property type="match status" value="1"/>
</dbReference>
<dbReference type="PROSITE" id="PS00211">
    <property type="entry name" value="ABC_TRANSPORTER_1"/>
    <property type="match status" value="1"/>
</dbReference>
<dbReference type="PROSITE" id="PS50893">
    <property type="entry name" value="ABC_TRANSPORTER_2"/>
    <property type="match status" value="1"/>
</dbReference>
<dbReference type="PROSITE" id="PS51249">
    <property type="entry name" value="PHNC"/>
    <property type="match status" value="1"/>
</dbReference>
<comment type="function">
    <text evidence="1">Part of the ABC transporter complex PhnCDE involved in phosphonates import. Responsible for energy coupling to the transport system.</text>
</comment>
<comment type="catalytic activity">
    <reaction evidence="1">
        <text>phosphonate(out) + ATP + H2O = phosphonate(in) + ADP + phosphate + H(+)</text>
        <dbReference type="Rhea" id="RHEA:18065"/>
        <dbReference type="ChEBI" id="CHEBI:15377"/>
        <dbReference type="ChEBI" id="CHEBI:15378"/>
        <dbReference type="ChEBI" id="CHEBI:16215"/>
        <dbReference type="ChEBI" id="CHEBI:30616"/>
        <dbReference type="ChEBI" id="CHEBI:43474"/>
        <dbReference type="ChEBI" id="CHEBI:456216"/>
        <dbReference type="EC" id="7.3.2.2"/>
    </reaction>
</comment>
<comment type="subunit">
    <text evidence="1">The complex is composed of two ATP-binding proteins (PhnC), two transmembrane proteins (PhnE) and a solute-binding protein (PhnD).</text>
</comment>
<comment type="subcellular location">
    <subcellularLocation>
        <location evidence="1">Cell membrane</location>
        <topology evidence="1">Peripheral membrane protein</topology>
    </subcellularLocation>
</comment>
<comment type="similarity">
    <text evidence="1">Belongs to the ABC transporter superfamily. Phosphonates importer (TC 3.A.1.9.1) family.</text>
</comment>
<protein>
    <recommendedName>
        <fullName evidence="1">Phosphonates import ATP-binding protein PhnC 3</fullName>
        <ecNumber evidence="1">7.3.2.2</ecNumber>
    </recommendedName>
</protein>
<sequence length="258" mass="28842">MIEFKNVSLVYPNGTQGLKDVNLKINEGEFVVIVGLSGAGKSTLIRSMNRLVTPTEGELLIDGENILPYSSRQLRKLRTKVGMIFQNYNLVKRSSVMKNVISGRLGHVGTFASLLNLYPKEDVALAYRSLQRVNIAEKVYQRADQLSGGQQQRVAIARVLTQQPKIILADEPVASLDPPTSHQVMTYLRKINKEDKITTIVNLHFIDMAMEYADRIIGMRAGEVVFDGPASDVSEETFEEIYGRKIREDDLVGGQDNE</sequence>
<proteinExistence type="inferred from homology"/>
<accession>Q9K8N1</accession>
<reference key="1">
    <citation type="journal article" date="2000" name="Nucleic Acids Res.">
        <title>Complete genome sequence of the alkaliphilic bacterium Bacillus halodurans and genomic sequence comparison with Bacillus subtilis.</title>
        <authorList>
            <person name="Takami H."/>
            <person name="Nakasone K."/>
            <person name="Takaki Y."/>
            <person name="Maeno G."/>
            <person name="Sasaki R."/>
            <person name="Masui N."/>
            <person name="Fuji F."/>
            <person name="Hirama C."/>
            <person name="Nakamura Y."/>
            <person name="Ogasawara N."/>
            <person name="Kuhara S."/>
            <person name="Horikoshi K."/>
        </authorList>
    </citation>
    <scope>NUCLEOTIDE SEQUENCE [LARGE SCALE GENOMIC DNA]</scope>
    <source>
        <strain>ATCC BAA-125 / DSM 18197 / FERM 7344 / JCM 9153 / C-125</strain>
    </source>
</reference>
<feature type="chain" id="PRO_0000092694" description="Phosphonates import ATP-binding protein PhnC 3">
    <location>
        <begin position="1"/>
        <end position="258"/>
    </location>
</feature>
<feature type="domain" description="ABC transporter" evidence="1">
    <location>
        <begin position="2"/>
        <end position="246"/>
    </location>
</feature>
<feature type="binding site" evidence="1">
    <location>
        <begin position="35"/>
        <end position="42"/>
    </location>
    <ligand>
        <name>ATP</name>
        <dbReference type="ChEBI" id="CHEBI:30616"/>
    </ligand>
</feature>
<keyword id="KW-0067">ATP-binding</keyword>
<keyword id="KW-1003">Cell membrane</keyword>
<keyword id="KW-0472">Membrane</keyword>
<keyword id="KW-0547">Nucleotide-binding</keyword>
<keyword id="KW-0918">Phosphonate transport</keyword>
<keyword id="KW-1185">Reference proteome</keyword>
<keyword id="KW-1278">Translocase</keyword>
<keyword id="KW-0813">Transport</keyword>